<keyword id="KW-0328">Glycosyltransferase</keyword>
<keyword id="KW-0479">Metal-binding</keyword>
<keyword id="KW-0671">Queuosine biosynthesis</keyword>
<keyword id="KW-1185">Reference proteome</keyword>
<keyword id="KW-0808">Transferase</keyword>
<keyword id="KW-0819">tRNA processing</keyword>
<keyword id="KW-0862">Zinc</keyword>
<name>TGT_ECO24</name>
<protein>
    <recommendedName>
        <fullName evidence="1">Queuine tRNA-ribosyltransferase</fullName>
        <ecNumber evidence="1">2.4.2.29</ecNumber>
    </recommendedName>
    <alternativeName>
        <fullName evidence="1">Guanine insertion enzyme</fullName>
    </alternativeName>
    <alternativeName>
        <fullName evidence="1">tRNA-guanine transglycosylase</fullName>
    </alternativeName>
</protein>
<sequence length="375" mass="42594">MKFELDTTDGRARRGRLVFDRGVVETPCFMPVGTYGTVKGMTPEEVEATGAQIILGNTFHLWLRPGQEIMKLHGDLHDFMQWKGPILTDSGGFQVFSLGDIRKITEQGVHFRNPINGDPIFLDPEKSMEIQYDLGSDIVMIFDECTPYPADWDYAKRSMEMSLRWAKRSRERFDSLGNKNALFGIIQGSVYEDLRDISVKGLVDIGFDGYAVGGLAVGEPKADMHRILEHVCPQIPADKPRYLMGVGKPEDLVEGVRRGIDMFDCVMPTRNARNGHLFVTDGVVKIRNAKYKSDTGPLDPECDCYTCRNYSRAYLHHLDRCNEILGARLNTIHNLRYYQRLMAGLRKAIEEGKLESFVTDFYQRQGREVPPLNVD</sequence>
<reference key="1">
    <citation type="journal article" date="2008" name="J. Bacteriol.">
        <title>The pangenome structure of Escherichia coli: comparative genomic analysis of E. coli commensal and pathogenic isolates.</title>
        <authorList>
            <person name="Rasko D.A."/>
            <person name="Rosovitz M.J."/>
            <person name="Myers G.S.A."/>
            <person name="Mongodin E.F."/>
            <person name="Fricke W.F."/>
            <person name="Gajer P."/>
            <person name="Crabtree J."/>
            <person name="Sebaihia M."/>
            <person name="Thomson N.R."/>
            <person name="Chaudhuri R."/>
            <person name="Henderson I.R."/>
            <person name="Sperandio V."/>
            <person name="Ravel J."/>
        </authorList>
    </citation>
    <scope>NUCLEOTIDE SEQUENCE [LARGE SCALE GENOMIC DNA]</scope>
    <source>
        <strain>E24377A / ETEC</strain>
    </source>
</reference>
<dbReference type="EC" id="2.4.2.29" evidence="1"/>
<dbReference type="EMBL" id="CP000800">
    <property type="protein sequence ID" value="ABV19963.1"/>
    <property type="molecule type" value="Genomic_DNA"/>
</dbReference>
<dbReference type="RefSeq" id="WP_000667319.1">
    <property type="nucleotide sequence ID" value="NC_009801.1"/>
</dbReference>
<dbReference type="SMR" id="A7ZIF8"/>
<dbReference type="GeneID" id="93777054"/>
<dbReference type="KEGG" id="ecw:EcE24377A_0436"/>
<dbReference type="HOGENOM" id="CLU_022060_0_1_6"/>
<dbReference type="UniPathway" id="UPA00392"/>
<dbReference type="Proteomes" id="UP000001122">
    <property type="component" value="Chromosome"/>
</dbReference>
<dbReference type="GO" id="GO:0005829">
    <property type="term" value="C:cytosol"/>
    <property type="evidence" value="ECO:0007669"/>
    <property type="project" value="TreeGrafter"/>
</dbReference>
<dbReference type="GO" id="GO:0046872">
    <property type="term" value="F:metal ion binding"/>
    <property type="evidence" value="ECO:0007669"/>
    <property type="project" value="UniProtKB-KW"/>
</dbReference>
<dbReference type="GO" id="GO:0008479">
    <property type="term" value="F:tRNA-guanosine(34) queuine transglycosylase activity"/>
    <property type="evidence" value="ECO:0007669"/>
    <property type="project" value="UniProtKB-UniRule"/>
</dbReference>
<dbReference type="GO" id="GO:0008616">
    <property type="term" value="P:queuosine biosynthetic process"/>
    <property type="evidence" value="ECO:0007669"/>
    <property type="project" value="UniProtKB-UniRule"/>
</dbReference>
<dbReference type="GO" id="GO:0002099">
    <property type="term" value="P:tRNA wobble guanine modification"/>
    <property type="evidence" value="ECO:0007669"/>
    <property type="project" value="TreeGrafter"/>
</dbReference>
<dbReference type="GO" id="GO:0101030">
    <property type="term" value="P:tRNA-guanine transglycosylation"/>
    <property type="evidence" value="ECO:0007669"/>
    <property type="project" value="InterPro"/>
</dbReference>
<dbReference type="FunFam" id="3.20.20.105:FF:000001">
    <property type="entry name" value="Queuine tRNA-ribosyltransferase"/>
    <property type="match status" value="1"/>
</dbReference>
<dbReference type="Gene3D" id="3.20.20.105">
    <property type="entry name" value="Queuine tRNA-ribosyltransferase-like"/>
    <property type="match status" value="1"/>
</dbReference>
<dbReference type="HAMAP" id="MF_00168">
    <property type="entry name" value="Q_tRNA_Tgt"/>
    <property type="match status" value="1"/>
</dbReference>
<dbReference type="InterPro" id="IPR050076">
    <property type="entry name" value="ArchSynthase1/Queuine_TRR"/>
</dbReference>
<dbReference type="InterPro" id="IPR004803">
    <property type="entry name" value="TGT"/>
</dbReference>
<dbReference type="InterPro" id="IPR036511">
    <property type="entry name" value="TGT-like_sf"/>
</dbReference>
<dbReference type="InterPro" id="IPR002616">
    <property type="entry name" value="tRNA_ribo_trans-like"/>
</dbReference>
<dbReference type="NCBIfam" id="TIGR00430">
    <property type="entry name" value="Q_tRNA_tgt"/>
    <property type="match status" value="1"/>
</dbReference>
<dbReference type="NCBIfam" id="TIGR00449">
    <property type="entry name" value="tgt_general"/>
    <property type="match status" value="1"/>
</dbReference>
<dbReference type="PANTHER" id="PTHR46499">
    <property type="entry name" value="QUEUINE TRNA-RIBOSYLTRANSFERASE"/>
    <property type="match status" value="1"/>
</dbReference>
<dbReference type="PANTHER" id="PTHR46499:SF1">
    <property type="entry name" value="QUEUINE TRNA-RIBOSYLTRANSFERASE"/>
    <property type="match status" value="1"/>
</dbReference>
<dbReference type="Pfam" id="PF01702">
    <property type="entry name" value="TGT"/>
    <property type="match status" value="1"/>
</dbReference>
<dbReference type="SUPFAM" id="SSF51713">
    <property type="entry name" value="tRNA-guanine transglycosylase"/>
    <property type="match status" value="1"/>
</dbReference>
<accession>A7ZIF8</accession>
<feature type="chain" id="PRO_1000058280" description="Queuine tRNA-ribosyltransferase">
    <location>
        <begin position="1"/>
        <end position="375"/>
    </location>
</feature>
<feature type="region of interest" description="RNA binding" evidence="1">
    <location>
        <begin position="245"/>
        <end position="251"/>
    </location>
</feature>
<feature type="region of interest" description="RNA binding; important for wobble base 34 recognition" evidence="1">
    <location>
        <begin position="269"/>
        <end position="273"/>
    </location>
</feature>
<feature type="active site" description="Proton acceptor" evidence="1">
    <location>
        <position position="89"/>
    </location>
</feature>
<feature type="active site" description="Nucleophile" evidence="1">
    <location>
        <position position="264"/>
    </location>
</feature>
<feature type="binding site" evidence="1">
    <location>
        <begin position="89"/>
        <end position="93"/>
    </location>
    <ligand>
        <name>substrate</name>
    </ligand>
</feature>
<feature type="binding site" evidence="1">
    <location>
        <position position="143"/>
    </location>
    <ligand>
        <name>substrate</name>
    </ligand>
</feature>
<feature type="binding site" evidence="1">
    <location>
        <position position="187"/>
    </location>
    <ligand>
        <name>substrate</name>
    </ligand>
</feature>
<feature type="binding site" evidence="1">
    <location>
        <position position="214"/>
    </location>
    <ligand>
        <name>substrate</name>
    </ligand>
</feature>
<feature type="binding site" evidence="1">
    <location>
        <position position="302"/>
    </location>
    <ligand>
        <name>Zn(2+)</name>
        <dbReference type="ChEBI" id="CHEBI:29105"/>
    </ligand>
</feature>
<feature type="binding site" evidence="1">
    <location>
        <position position="304"/>
    </location>
    <ligand>
        <name>Zn(2+)</name>
        <dbReference type="ChEBI" id="CHEBI:29105"/>
    </ligand>
</feature>
<feature type="binding site" evidence="1">
    <location>
        <position position="307"/>
    </location>
    <ligand>
        <name>Zn(2+)</name>
        <dbReference type="ChEBI" id="CHEBI:29105"/>
    </ligand>
</feature>
<feature type="binding site" evidence="1">
    <location>
        <position position="333"/>
    </location>
    <ligand>
        <name>Zn(2+)</name>
        <dbReference type="ChEBI" id="CHEBI:29105"/>
    </ligand>
</feature>
<comment type="function">
    <text evidence="1">Catalyzes the base-exchange of a guanine (G) residue with the queuine precursor 7-aminomethyl-7-deazaguanine (PreQ1) at position 34 (anticodon wobble position) in tRNAs with GU(N) anticodons (tRNA-Asp, -Asn, -His and -Tyr). Catalysis occurs through a double-displacement mechanism. The nucleophile active site attacks the C1' of nucleotide 34 to detach the guanine base from the RNA, forming a covalent enzyme-RNA intermediate. The proton acceptor active site deprotonates the incoming PreQ1, allowing a nucleophilic attack on the C1' of the ribose to form the product. After dissociation, two additional enzymatic reactions on the tRNA convert PreQ1 to queuine (Q), resulting in the hypermodified nucleoside queuosine (7-(((4,5-cis-dihydroxy-2-cyclopenten-1-yl)amino)methyl)-7-deazaguanosine).</text>
</comment>
<comment type="catalytic activity">
    <reaction evidence="1">
        <text>7-aminomethyl-7-carbaguanine + guanosine(34) in tRNA = 7-aminomethyl-7-carbaguanosine(34) in tRNA + guanine</text>
        <dbReference type="Rhea" id="RHEA:24104"/>
        <dbReference type="Rhea" id="RHEA-COMP:10341"/>
        <dbReference type="Rhea" id="RHEA-COMP:10342"/>
        <dbReference type="ChEBI" id="CHEBI:16235"/>
        <dbReference type="ChEBI" id="CHEBI:58703"/>
        <dbReference type="ChEBI" id="CHEBI:74269"/>
        <dbReference type="ChEBI" id="CHEBI:82833"/>
        <dbReference type="EC" id="2.4.2.29"/>
    </reaction>
</comment>
<comment type="cofactor">
    <cofactor evidence="1">
        <name>Zn(2+)</name>
        <dbReference type="ChEBI" id="CHEBI:29105"/>
    </cofactor>
    <text evidence="1">Binds 1 zinc ion per subunit.</text>
</comment>
<comment type="pathway">
    <text evidence="1">tRNA modification; tRNA-queuosine biosynthesis.</text>
</comment>
<comment type="subunit">
    <text evidence="1">Homodimer. Within each dimer, one monomer is responsible for RNA recognition and catalysis, while the other monomer binds to the replacement base PreQ1.</text>
</comment>
<comment type="similarity">
    <text evidence="1">Belongs to the queuine tRNA-ribosyltransferase family.</text>
</comment>
<organism>
    <name type="scientific">Escherichia coli O139:H28 (strain E24377A / ETEC)</name>
    <dbReference type="NCBI Taxonomy" id="331111"/>
    <lineage>
        <taxon>Bacteria</taxon>
        <taxon>Pseudomonadati</taxon>
        <taxon>Pseudomonadota</taxon>
        <taxon>Gammaproteobacteria</taxon>
        <taxon>Enterobacterales</taxon>
        <taxon>Enterobacteriaceae</taxon>
        <taxon>Escherichia</taxon>
    </lineage>
</organism>
<proteinExistence type="inferred from homology"/>
<gene>
    <name evidence="1" type="primary">tgt</name>
    <name type="ordered locus">EcE24377A_0436</name>
</gene>
<evidence type="ECO:0000255" key="1">
    <source>
        <dbReference type="HAMAP-Rule" id="MF_00168"/>
    </source>
</evidence>